<accession>P81919</accession>
<accession>Q9U6X9</accession>
<accession>Q9V5H3</accession>
<evidence type="ECO:0000250" key="1"/>
<evidence type="ECO:0000255" key="2"/>
<evidence type="ECO:0000269" key="3">
    <source>
    </source>
</evidence>
<evidence type="ECO:0000269" key="4">
    <source>
    </source>
</evidence>
<evidence type="ECO:0000305" key="5"/>
<protein>
    <recommendedName>
        <fullName>Odorant receptor 46a, isoform A</fullName>
    </recommendedName>
</protein>
<sequence>MSKGVEIFYKGQKAFLNILSLWPQIERRWRIIHQVNYVHVIVFWVLLFDLLLVLHVMANLSYMSEVVKAIFILATSAGHTTKLLSIKANNVQMEELFRRLDNEEFRPRGANEELIFAAACERSRKLRDFYGALSFAALSMILIPQFALDWSHLPLKTYNPLGENTGSPAYWLLYCYQCLALSVSCITNIGFDSLCSSLFIFLKCQLDILAVRLDKIGRLITTSGGTVEQQLKENIRYHMTIVELSKTVERLLCKPISVQIFCSVLVLTANFYAIAVLSDERLELFKYVTYQACMLIQIFILCYYAGEVTQRSLDLPHELYKTSWVDWDYRSRRIALLFMQRLHSTLRIRTLNPSLGFDLMLFSSIVNCSYSYFALLKRVNS</sequence>
<keyword id="KW-0025">Alternative splicing</keyword>
<keyword id="KW-1003">Cell membrane</keyword>
<keyword id="KW-0325">Glycoprotein</keyword>
<keyword id="KW-0472">Membrane</keyword>
<keyword id="KW-0552">Olfaction</keyword>
<keyword id="KW-0675">Receptor</keyword>
<keyword id="KW-1185">Reference proteome</keyword>
<keyword id="KW-0716">Sensory transduction</keyword>
<keyword id="KW-0807">Transducer</keyword>
<keyword id="KW-0812">Transmembrane</keyword>
<keyword id="KW-1133">Transmembrane helix</keyword>
<dbReference type="EMBL" id="AE013599">
    <property type="protein sequence ID" value="AAF58834.3"/>
    <property type="molecule type" value="Genomic_DNA"/>
</dbReference>
<dbReference type="RefSeq" id="NP_995794.1">
    <molecule id="P81919-1"/>
    <property type="nucleotide sequence ID" value="NM_206072.2"/>
</dbReference>
<dbReference type="SMR" id="P81919"/>
<dbReference type="TCDB" id="1.A.69.1.1">
    <property type="family name" value="the heteromeric odorant receptor channel (horc) family"/>
</dbReference>
<dbReference type="GlyCosmos" id="P81919">
    <property type="glycosylation" value="1 site, No reported glycans"/>
</dbReference>
<dbReference type="EnsemblMetazoa" id="FBtr0088330">
    <molecule id="P81919-1"/>
    <property type="protein sequence ID" value="FBpp0089407"/>
    <property type="gene ID" value="FBgn0026388"/>
</dbReference>
<dbReference type="GeneID" id="2768728"/>
<dbReference type="AGR" id="FB:FBgn0026388"/>
<dbReference type="CTD" id="2768728"/>
<dbReference type="FlyBase" id="FBgn0026388">
    <property type="gene designation" value="Or46a"/>
</dbReference>
<dbReference type="VEuPathDB" id="VectorBase:FBgn0026388"/>
<dbReference type="GeneTree" id="ENSGT00530000064740"/>
<dbReference type="OMA" id="HHVACDS"/>
<dbReference type="OrthoDB" id="5846619at2759"/>
<dbReference type="BioGRID-ORCS" id="2768728">
    <property type="hits" value="0 hits in 1 CRISPR screen"/>
</dbReference>
<dbReference type="GenomeRNAi" id="2768728"/>
<dbReference type="Proteomes" id="UP000000803">
    <property type="component" value="Chromosome 2R"/>
</dbReference>
<dbReference type="Bgee" id="FBgn0026388">
    <property type="expression patterns" value="Expressed in maxillary palp olfactory receptor neuron (Drosophila) in proboscis and 4 other cell types or tissues"/>
</dbReference>
<dbReference type="ExpressionAtlas" id="P81919">
    <property type="expression patterns" value="differential"/>
</dbReference>
<dbReference type="GO" id="GO:0032590">
    <property type="term" value="C:dendrite membrane"/>
    <property type="evidence" value="ECO:0000250"/>
    <property type="project" value="FlyBase"/>
</dbReference>
<dbReference type="GO" id="GO:0016020">
    <property type="term" value="C:membrane"/>
    <property type="evidence" value="ECO:0000303"/>
    <property type="project" value="UniProtKB"/>
</dbReference>
<dbReference type="GO" id="GO:0005886">
    <property type="term" value="C:plasma membrane"/>
    <property type="evidence" value="ECO:0000255"/>
    <property type="project" value="FlyBase"/>
</dbReference>
<dbReference type="GO" id="GO:0005549">
    <property type="term" value="F:odorant binding"/>
    <property type="evidence" value="ECO:0000250"/>
    <property type="project" value="FlyBase"/>
</dbReference>
<dbReference type="GO" id="GO:0004984">
    <property type="term" value="F:olfactory receptor activity"/>
    <property type="evidence" value="ECO:0000315"/>
    <property type="project" value="FlyBase"/>
</dbReference>
<dbReference type="GO" id="GO:0050911">
    <property type="term" value="P:detection of chemical stimulus involved in sensory perception of smell"/>
    <property type="evidence" value="ECO:0000315"/>
    <property type="project" value="FlyBase"/>
</dbReference>
<dbReference type="GO" id="GO:0007608">
    <property type="term" value="P:sensory perception of smell"/>
    <property type="evidence" value="ECO:0000250"/>
    <property type="project" value="FlyBase"/>
</dbReference>
<dbReference type="GO" id="GO:0007165">
    <property type="term" value="P:signal transduction"/>
    <property type="evidence" value="ECO:0007669"/>
    <property type="project" value="UniProtKB-KW"/>
</dbReference>
<dbReference type="InterPro" id="IPR004117">
    <property type="entry name" value="7tm6_olfct_rcpt"/>
</dbReference>
<dbReference type="PANTHER" id="PTHR21137">
    <property type="entry name" value="ODORANT RECEPTOR"/>
    <property type="match status" value="1"/>
</dbReference>
<dbReference type="PANTHER" id="PTHR21137:SF37">
    <property type="entry name" value="ODORANT RECEPTOR 46A, ISOFORM B-RELATED"/>
    <property type="match status" value="1"/>
</dbReference>
<dbReference type="Pfam" id="PF02949">
    <property type="entry name" value="7tm_6"/>
    <property type="match status" value="1"/>
</dbReference>
<comment type="function">
    <text evidence="1">Odorant receptor which mediates acceptance or avoidance behavior, depending on its substrates. The odorant receptor repertoire encodes a large collection of odor stimuli that vary widely in identity, intensity, and duration. May form a complex with Orco to form odorant-sensing units, providing sensitive and prolonged odorant signaling and calcium permeability (By similarity).</text>
</comment>
<comment type="subunit">
    <text evidence="1">Interacts with Orco. Complexes exist early in the endomembrane system in olfactory sensory neurons (OSNs), coupling these complexes to the conserved ciliary trafficking pathway (By similarity).</text>
</comment>
<comment type="subcellular location">
    <subcellularLocation>
        <location evidence="1">Cell membrane</location>
        <topology evidence="1">Multi-pass membrane protein</topology>
    </subcellularLocation>
</comment>
<comment type="alternative products">
    <event type="alternative splicing"/>
    <isoform>
        <id>P81919-1</id>
        <name>A</name>
        <sequence type="displayed"/>
    </isoform>
    <isoform>
        <id>Q9V3N2-1</id>
        <name>B</name>
        <sequence type="external"/>
    </isoform>
</comment>
<comment type="tissue specificity">
    <text evidence="3 4">Isoform A is expressed in a subset of 17 olfactory receptor neurons in the maxillary palp.</text>
</comment>
<comment type="miscellaneous">
    <text>The atypical heteromeric and topological design of the odorant receptors appears to be an insect-specific solution for odor recognition, making the OR/Orco complex an attractive target for the development of highly selective insect repellents to disrupt olfactory-mediated host-seeking behaviors of insect disease vectors. Odor-evoked OR currents are independent of known G-protein-coupled second messenger pathways.</text>
</comment>
<comment type="similarity">
    <text evidence="5">Belongs to the insect chemoreceptor superfamily. Heteromeric odorant receptor channel (TC 1.A.69) family. Or2a subfamily.</text>
</comment>
<proteinExistence type="evidence at transcript level"/>
<gene>
    <name type="primary">Or46a</name>
    <name type="synonym">AN8</name>
    <name type="synonym">AN9</name>
    <name type="synonym">dor19</name>
    <name type="synonym">DOR46F</name>
    <name type="synonym">DOR46F.1</name>
    <name type="synonym">Or46b</name>
    <name type="synonym">OR46F</name>
    <name type="synonym">Or46F.1</name>
    <name type="synonym">Or46F.2</name>
    <name type="ORF">CG33478</name>
</gene>
<reference key="1">
    <citation type="journal article" date="1999" name="Genomics">
        <title>Identification of candidate Drosophila olfactory receptors from genomic DNA sequence.</title>
        <authorList>
            <person name="Gao Q."/>
            <person name="Chess A."/>
        </authorList>
    </citation>
    <scope>NUCLEOTIDE SEQUENCE [GENOMIC DNA]</scope>
</reference>
<reference key="2">
    <citation type="journal article" date="2000" name="Science">
        <title>The genome sequence of Drosophila melanogaster.</title>
        <authorList>
            <person name="Adams M.D."/>
            <person name="Celniker S.E."/>
            <person name="Holt R.A."/>
            <person name="Evans C.A."/>
            <person name="Gocayne J.D."/>
            <person name="Amanatides P.G."/>
            <person name="Scherer S.E."/>
            <person name="Li P.W."/>
            <person name="Hoskins R.A."/>
            <person name="Galle R.F."/>
            <person name="George R.A."/>
            <person name="Lewis S.E."/>
            <person name="Richards S."/>
            <person name="Ashburner M."/>
            <person name="Henderson S.N."/>
            <person name="Sutton G.G."/>
            <person name="Wortman J.R."/>
            <person name="Yandell M.D."/>
            <person name="Zhang Q."/>
            <person name="Chen L.X."/>
            <person name="Brandon R.C."/>
            <person name="Rogers Y.-H.C."/>
            <person name="Blazej R.G."/>
            <person name="Champe M."/>
            <person name="Pfeiffer B.D."/>
            <person name="Wan K.H."/>
            <person name="Doyle C."/>
            <person name="Baxter E.G."/>
            <person name="Helt G."/>
            <person name="Nelson C.R."/>
            <person name="Miklos G.L.G."/>
            <person name="Abril J.F."/>
            <person name="Agbayani A."/>
            <person name="An H.-J."/>
            <person name="Andrews-Pfannkoch C."/>
            <person name="Baldwin D."/>
            <person name="Ballew R.M."/>
            <person name="Basu A."/>
            <person name="Baxendale J."/>
            <person name="Bayraktaroglu L."/>
            <person name="Beasley E.M."/>
            <person name="Beeson K.Y."/>
            <person name="Benos P.V."/>
            <person name="Berman B.P."/>
            <person name="Bhandari D."/>
            <person name="Bolshakov S."/>
            <person name="Borkova D."/>
            <person name="Botchan M.R."/>
            <person name="Bouck J."/>
            <person name="Brokstein P."/>
            <person name="Brottier P."/>
            <person name="Burtis K.C."/>
            <person name="Busam D.A."/>
            <person name="Butler H."/>
            <person name="Cadieu E."/>
            <person name="Center A."/>
            <person name="Chandra I."/>
            <person name="Cherry J.M."/>
            <person name="Cawley S."/>
            <person name="Dahlke C."/>
            <person name="Davenport L.B."/>
            <person name="Davies P."/>
            <person name="de Pablos B."/>
            <person name="Delcher A."/>
            <person name="Deng Z."/>
            <person name="Mays A.D."/>
            <person name="Dew I."/>
            <person name="Dietz S.M."/>
            <person name="Dodson K."/>
            <person name="Doup L.E."/>
            <person name="Downes M."/>
            <person name="Dugan-Rocha S."/>
            <person name="Dunkov B.C."/>
            <person name="Dunn P."/>
            <person name="Durbin K.J."/>
            <person name="Evangelista C.C."/>
            <person name="Ferraz C."/>
            <person name="Ferriera S."/>
            <person name="Fleischmann W."/>
            <person name="Fosler C."/>
            <person name="Gabrielian A.E."/>
            <person name="Garg N.S."/>
            <person name="Gelbart W.M."/>
            <person name="Glasser K."/>
            <person name="Glodek A."/>
            <person name="Gong F."/>
            <person name="Gorrell J.H."/>
            <person name="Gu Z."/>
            <person name="Guan P."/>
            <person name="Harris M."/>
            <person name="Harris N.L."/>
            <person name="Harvey D.A."/>
            <person name="Heiman T.J."/>
            <person name="Hernandez J.R."/>
            <person name="Houck J."/>
            <person name="Hostin D."/>
            <person name="Houston K.A."/>
            <person name="Howland T.J."/>
            <person name="Wei M.-H."/>
            <person name="Ibegwam C."/>
            <person name="Jalali M."/>
            <person name="Kalush F."/>
            <person name="Karpen G.H."/>
            <person name="Ke Z."/>
            <person name="Kennison J.A."/>
            <person name="Ketchum K.A."/>
            <person name="Kimmel B.E."/>
            <person name="Kodira C.D."/>
            <person name="Kraft C.L."/>
            <person name="Kravitz S."/>
            <person name="Kulp D."/>
            <person name="Lai Z."/>
            <person name="Lasko P."/>
            <person name="Lei Y."/>
            <person name="Levitsky A.A."/>
            <person name="Li J.H."/>
            <person name="Li Z."/>
            <person name="Liang Y."/>
            <person name="Lin X."/>
            <person name="Liu X."/>
            <person name="Mattei B."/>
            <person name="McIntosh T.C."/>
            <person name="McLeod M.P."/>
            <person name="McPherson D."/>
            <person name="Merkulov G."/>
            <person name="Milshina N.V."/>
            <person name="Mobarry C."/>
            <person name="Morris J."/>
            <person name="Moshrefi A."/>
            <person name="Mount S.M."/>
            <person name="Moy M."/>
            <person name="Murphy B."/>
            <person name="Murphy L."/>
            <person name="Muzny D.M."/>
            <person name="Nelson D.L."/>
            <person name="Nelson D.R."/>
            <person name="Nelson K.A."/>
            <person name="Nixon K."/>
            <person name="Nusskern D.R."/>
            <person name="Pacleb J.M."/>
            <person name="Palazzolo M."/>
            <person name="Pittman G.S."/>
            <person name="Pan S."/>
            <person name="Pollard J."/>
            <person name="Puri V."/>
            <person name="Reese M.G."/>
            <person name="Reinert K."/>
            <person name="Remington K."/>
            <person name="Saunders R.D.C."/>
            <person name="Scheeler F."/>
            <person name="Shen H."/>
            <person name="Shue B.C."/>
            <person name="Siden-Kiamos I."/>
            <person name="Simpson M."/>
            <person name="Skupski M.P."/>
            <person name="Smith T.J."/>
            <person name="Spier E."/>
            <person name="Spradling A.C."/>
            <person name="Stapleton M."/>
            <person name="Strong R."/>
            <person name="Sun E."/>
            <person name="Svirskas R."/>
            <person name="Tector C."/>
            <person name="Turner R."/>
            <person name="Venter E."/>
            <person name="Wang A.H."/>
            <person name="Wang X."/>
            <person name="Wang Z.-Y."/>
            <person name="Wassarman D.A."/>
            <person name="Weinstock G.M."/>
            <person name="Weissenbach J."/>
            <person name="Williams S.M."/>
            <person name="Woodage T."/>
            <person name="Worley K.C."/>
            <person name="Wu D."/>
            <person name="Yang S."/>
            <person name="Yao Q.A."/>
            <person name="Ye J."/>
            <person name="Yeh R.-F."/>
            <person name="Zaveri J.S."/>
            <person name="Zhan M."/>
            <person name="Zhang G."/>
            <person name="Zhao Q."/>
            <person name="Zheng L."/>
            <person name="Zheng X.H."/>
            <person name="Zhong F.N."/>
            <person name="Zhong W."/>
            <person name="Zhou X."/>
            <person name="Zhu S.C."/>
            <person name="Zhu X."/>
            <person name="Smith H.O."/>
            <person name="Gibbs R.A."/>
            <person name="Myers E.W."/>
            <person name="Rubin G.M."/>
            <person name="Venter J.C."/>
        </authorList>
    </citation>
    <scope>NUCLEOTIDE SEQUENCE [LARGE SCALE GENOMIC DNA]</scope>
    <source>
        <strain>Berkeley</strain>
    </source>
</reference>
<reference key="3">
    <citation type="journal article" date="2002" name="Genome Biol.">
        <title>Annotation of the Drosophila melanogaster euchromatic genome: a systematic review.</title>
        <authorList>
            <person name="Misra S."/>
            <person name="Crosby M.A."/>
            <person name="Mungall C.J."/>
            <person name="Matthews B.B."/>
            <person name="Campbell K.S."/>
            <person name="Hradecky P."/>
            <person name="Huang Y."/>
            <person name="Kaminker J.S."/>
            <person name="Millburn G.H."/>
            <person name="Prochnik S.E."/>
            <person name="Smith C.D."/>
            <person name="Tupy J.L."/>
            <person name="Whitfield E.J."/>
            <person name="Bayraktaroglu L."/>
            <person name="Berman B.P."/>
            <person name="Bettencourt B.R."/>
            <person name="Celniker S.E."/>
            <person name="de Grey A.D.N.J."/>
            <person name="Drysdale R.A."/>
            <person name="Harris N.L."/>
            <person name="Richter J."/>
            <person name="Russo S."/>
            <person name="Schroeder A.J."/>
            <person name="Shu S.Q."/>
            <person name="Stapleton M."/>
            <person name="Yamada C."/>
            <person name="Ashburner M."/>
            <person name="Gelbart W.M."/>
            <person name="Rubin G.M."/>
            <person name="Lewis S.E."/>
        </authorList>
    </citation>
    <scope>GENOME REANNOTATION</scope>
    <source>
        <strain>Berkeley</strain>
    </source>
</reference>
<reference key="4">
    <citation type="journal article" date="1999" name="Neuron">
        <title>A novel family of divergent seven-transmembrane proteins: candidate odorant receptors in Drosophila.</title>
        <authorList>
            <person name="Clyne P.J."/>
            <person name="Warr C.G."/>
            <person name="Freeman M.R."/>
            <person name="Lessing D."/>
            <person name="Kim J."/>
            <person name="Carlson J.R."/>
        </authorList>
    </citation>
    <scope>IDENTIFICATION</scope>
    <scope>TISSUE SPECIFICITY</scope>
</reference>
<reference key="5">
    <citation type="journal article" date="2000" name="Cell">
        <title>An olfactory sensory map in the fly brain.</title>
        <authorList>
            <person name="Vosshall L.B."/>
            <person name="Wong A.M."/>
            <person name="Axel R."/>
        </authorList>
    </citation>
    <scope>TISSUE SPECIFICITY</scope>
</reference>
<reference key="6">
    <citation type="journal article" date="2003" name="Proc. Natl. Acad. Sci. U.S.A.">
        <title>Molecular evolution of the insect chemoreceptor gene superfamily in Drosophila melanogaster.</title>
        <authorList>
            <person name="Robertson H.M."/>
            <person name="Warr C.G."/>
            <person name="Carlson J.R."/>
        </authorList>
    </citation>
    <scope>IDENTIFICATION OF ALTERNATIVE SPLICING</scope>
</reference>
<organism>
    <name type="scientific">Drosophila melanogaster</name>
    <name type="common">Fruit fly</name>
    <dbReference type="NCBI Taxonomy" id="7227"/>
    <lineage>
        <taxon>Eukaryota</taxon>
        <taxon>Metazoa</taxon>
        <taxon>Ecdysozoa</taxon>
        <taxon>Arthropoda</taxon>
        <taxon>Hexapoda</taxon>
        <taxon>Insecta</taxon>
        <taxon>Pterygota</taxon>
        <taxon>Neoptera</taxon>
        <taxon>Endopterygota</taxon>
        <taxon>Diptera</taxon>
        <taxon>Brachycera</taxon>
        <taxon>Muscomorpha</taxon>
        <taxon>Ephydroidea</taxon>
        <taxon>Drosophilidae</taxon>
        <taxon>Drosophila</taxon>
        <taxon>Sophophora</taxon>
    </lineage>
</organism>
<feature type="chain" id="PRO_0000174248" description="Odorant receptor 46a, isoform A">
    <location>
        <begin position="1"/>
        <end position="381"/>
    </location>
</feature>
<feature type="topological domain" description="Cytoplasmic" evidence="2">
    <location>
        <begin position="1"/>
        <end position="37"/>
    </location>
</feature>
<feature type="transmembrane region" description="Helical; Name=1" evidence="2">
    <location>
        <begin position="38"/>
        <end position="58"/>
    </location>
</feature>
<feature type="topological domain" description="Extracellular" evidence="2">
    <location>
        <begin position="59"/>
        <end position="65"/>
    </location>
</feature>
<feature type="transmembrane region" description="Helical; Name=2" evidence="2">
    <location>
        <begin position="66"/>
        <end position="86"/>
    </location>
</feature>
<feature type="topological domain" description="Cytoplasmic" evidence="2">
    <location>
        <begin position="87"/>
        <end position="127"/>
    </location>
</feature>
<feature type="transmembrane region" description="Helical; Name=3" evidence="2">
    <location>
        <begin position="128"/>
        <end position="148"/>
    </location>
</feature>
<feature type="topological domain" description="Extracellular" evidence="2">
    <location>
        <begin position="149"/>
        <end position="170"/>
    </location>
</feature>
<feature type="transmembrane region" description="Helical; Name=4" evidence="2">
    <location>
        <begin position="171"/>
        <end position="191"/>
    </location>
</feature>
<feature type="topological domain" description="Cytoplasmic" evidence="2">
    <location>
        <begin position="192"/>
        <end position="255"/>
    </location>
</feature>
<feature type="transmembrane region" description="Helical; Name=5" evidence="2">
    <location>
        <begin position="256"/>
        <end position="276"/>
    </location>
</feature>
<feature type="topological domain" description="Extracellular" evidence="2">
    <location>
        <begin position="277"/>
        <end position="287"/>
    </location>
</feature>
<feature type="transmembrane region" description="Helical; Name=6" evidence="2">
    <location>
        <begin position="288"/>
        <end position="308"/>
    </location>
</feature>
<feature type="topological domain" description="Cytoplasmic" evidence="2">
    <location>
        <begin position="309"/>
        <end position="355"/>
    </location>
</feature>
<feature type="transmembrane region" description="Helical; Name=7" evidence="2">
    <location>
        <begin position="356"/>
        <end position="376"/>
    </location>
</feature>
<feature type="topological domain" description="Extracellular" evidence="2">
    <location>
        <begin position="377"/>
        <end position="381"/>
    </location>
</feature>
<feature type="glycosylation site" description="N-linked (GlcNAc...) asparagine" evidence="2">
    <location>
        <position position="59"/>
    </location>
</feature>
<name>OR46A_DROME</name>